<keyword id="KW-0133">Cell shape</keyword>
<keyword id="KW-0961">Cell wall biogenesis/degradation</keyword>
<keyword id="KW-0460">Magnesium</keyword>
<keyword id="KW-0479">Metal-binding</keyword>
<keyword id="KW-0573">Peptidoglycan synthesis</keyword>
<keyword id="KW-1185">Reference proteome</keyword>
<keyword id="KW-0808">Transferase</keyword>
<dbReference type="EC" id="2.5.1.31" evidence="1"/>
<dbReference type="EMBL" id="AE006468">
    <property type="protein sequence ID" value="AAL19185.1"/>
    <property type="molecule type" value="Genomic_DNA"/>
</dbReference>
<dbReference type="RefSeq" id="NP_459226.1">
    <property type="nucleotide sequence ID" value="NC_003197.2"/>
</dbReference>
<dbReference type="RefSeq" id="WP_000947413.1">
    <property type="nucleotide sequence ID" value="NC_003197.2"/>
</dbReference>
<dbReference type="SMR" id="Q8ZRP2"/>
<dbReference type="STRING" id="99287.STM0221"/>
<dbReference type="PaxDb" id="99287-STM0221"/>
<dbReference type="GeneID" id="1251739"/>
<dbReference type="KEGG" id="stm:STM0221"/>
<dbReference type="PATRIC" id="fig|99287.12.peg.234"/>
<dbReference type="HOGENOM" id="CLU_038505_1_1_6"/>
<dbReference type="OMA" id="FDRRDLW"/>
<dbReference type="PhylomeDB" id="Q8ZRP2"/>
<dbReference type="BioCyc" id="SENT99287:STM0221-MONOMER"/>
<dbReference type="Proteomes" id="UP000001014">
    <property type="component" value="Chromosome"/>
</dbReference>
<dbReference type="GO" id="GO:0005829">
    <property type="term" value="C:cytosol"/>
    <property type="evidence" value="ECO:0000318"/>
    <property type="project" value="GO_Central"/>
</dbReference>
<dbReference type="GO" id="GO:0008834">
    <property type="term" value="F:ditrans,polycis-undecaprenyl-diphosphate synthase [(2E,6E)-farnesyl-diphosphate specific] activity"/>
    <property type="evidence" value="ECO:0000318"/>
    <property type="project" value="GO_Central"/>
</dbReference>
<dbReference type="GO" id="GO:0000287">
    <property type="term" value="F:magnesium ion binding"/>
    <property type="evidence" value="ECO:0000318"/>
    <property type="project" value="GO_Central"/>
</dbReference>
<dbReference type="GO" id="GO:0071555">
    <property type="term" value="P:cell wall organization"/>
    <property type="evidence" value="ECO:0007669"/>
    <property type="project" value="UniProtKB-KW"/>
</dbReference>
<dbReference type="GO" id="GO:0009252">
    <property type="term" value="P:peptidoglycan biosynthetic process"/>
    <property type="evidence" value="ECO:0007669"/>
    <property type="project" value="UniProtKB-UniRule"/>
</dbReference>
<dbReference type="GO" id="GO:0016094">
    <property type="term" value="P:polyprenol biosynthetic process"/>
    <property type="evidence" value="ECO:0000318"/>
    <property type="project" value="GO_Central"/>
</dbReference>
<dbReference type="GO" id="GO:0008360">
    <property type="term" value="P:regulation of cell shape"/>
    <property type="evidence" value="ECO:0007669"/>
    <property type="project" value="UniProtKB-KW"/>
</dbReference>
<dbReference type="CDD" id="cd00475">
    <property type="entry name" value="Cis_IPPS"/>
    <property type="match status" value="1"/>
</dbReference>
<dbReference type="FunFam" id="3.40.1180.10:FF:000001">
    <property type="entry name" value="(2E,6E)-farnesyl-diphosphate-specific ditrans,polycis-undecaprenyl-diphosphate synthase"/>
    <property type="match status" value="1"/>
</dbReference>
<dbReference type="Gene3D" id="3.40.1180.10">
    <property type="entry name" value="Decaprenyl diphosphate synthase-like"/>
    <property type="match status" value="1"/>
</dbReference>
<dbReference type="HAMAP" id="MF_01139">
    <property type="entry name" value="ISPT"/>
    <property type="match status" value="1"/>
</dbReference>
<dbReference type="InterPro" id="IPR001441">
    <property type="entry name" value="UPP_synth-like"/>
</dbReference>
<dbReference type="InterPro" id="IPR018520">
    <property type="entry name" value="UPP_synth-like_CS"/>
</dbReference>
<dbReference type="InterPro" id="IPR036424">
    <property type="entry name" value="UPP_synth-like_sf"/>
</dbReference>
<dbReference type="NCBIfam" id="NF007596">
    <property type="entry name" value="PRK10240.1"/>
    <property type="match status" value="1"/>
</dbReference>
<dbReference type="NCBIfam" id="TIGR00055">
    <property type="entry name" value="uppS"/>
    <property type="match status" value="1"/>
</dbReference>
<dbReference type="PANTHER" id="PTHR10291:SF0">
    <property type="entry name" value="DEHYDRODOLICHYL DIPHOSPHATE SYNTHASE 2"/>
    <property type="match status" value="1"/>
</dbReference>
<dbReference type="PANTHER" id="PTHR10291">
    <property type="entry name" value="DEHYDRODOLICHYL DIPHOSPHATE SYNTHASE FAMILY MEMBER"/>
    <property type="match status" value="1"/>
</dbReference>
<dbReference type="Pfam" id="PF01255">
    <property type="entry name" value="Prenyltransf"/>
    <property type="match status" value="1"/>
</dbReference>
<dbReference type="SUPFAM" id="SSF64005">
    <property type="entry name" value="Undecaprenyl diphosphate synthase"/>
    <property type="match status" value="1"/>
</dbReference>
<dbReference type="PROSITE" id="PS01066">
    <property type="entry name" value="UPP_SYNTHASE"/>
    <property type="match status" value="1"/>
</dbReference>
<proteinExistence type="inferred from homology"/>
<protein>
    <recommendedName>
        <fullName evidence="1">Ditrans,polycis-undecaprenyl-diphosphate synthase ((2E,6E)-farnesyl-diphosphate specific)</fullName>
        <ecNumber evidence="1">2.5.1.31</ecNumber>
    </recommendedName>
    <alternativeName>
        <fullName evidence="1">Ditrans,polycis-undecaprenylcistransferase</fullName>
    </alternativeName>
    <alternativeName>
        <fullName evidence="1">Undecaprenyl diphosphate synthase</fullName>
        <shortName evidence="1">UDS</shortName>
    </alternativeName>
    <alternativeName>
        <fullName evidence="1">Undecaprenyl pyrophosphate synthase</fullName>
        <shortName evidence="1">UPP synthase</shortName>
    </alternativeName>
</protein>
<comment type="function">
    <text evidence="1">Catalyzes the sequential condensation of isopentenyl diphosphate (IPP) with (2E,6E)-farnesyl diphosphate (E,E-FPP) to yield (2Z,6Z,10Z,14Z,18Z,22Z,26Z,30Z,34E,38E)-undecaprenyl diphosphate (di-trans,octa-cis-UPP). UPP is the precursor of glycosyl carrier lipid in the biosynthesis of bacterial cell wall polysaccharide components such as peptidoglycan and lipopolysaccharide.</text>
</comment>
<comment type="catalytic activity">
    <reaction evidence="1">
        <text>8 isopentenyl diphosphate + (2E,6E)-farnesyl diphosphate = di-trans,octa-cis-undecaprenyl diphosphate + 8 diphosphate</text>
        <dbReference type="Rhea" id="RHEA:27551"/>
        <dbReference type="ChEBI" id="CHEBI:33019"/>
        <dbReference type="ChEBI" id="CHEBI:58405"/>
        <dbReference type="ChEBI" id="CHEBI:128769"/>
        <dbReference type="ChEBI" id="CHEBI:175763"/>
        <dbReference type="EC" id="2.5.1.31"/>
    </reaction>
</comment>
<comment type="cofactor">
    <cofactor evidence="1">
        <name>Mg(2+)</name>
        <dbReference type="ChEBI" id="CHEBI:18420"/>
    </cofactor>
    <text evidence="1">Binds 2 magnesium ions per subunit.</text>
</comment>
<comment type="subunit">
    <text evidence="1">Homodimer.</text>
</comment>
<comment type="similarity">
    <text evidence="1">Belongs to the UPP synthase family.</text>
</comment>
<evidence type="ECO:0000255" key="1">
    <source>
        <dbReference type="HAMAP-Rule" id="MF_01139"/>
    </source>
</evidence>
<sequence length="252" mass="28328">MLSATQPVSENLPAHGCRHVAIIMDGNGRWAKKQGKIRAFGHKAGAKSVRRAVSFAANNGIDALTLYAFSSENWNRPAQEVSALMELFVWALDSEVKSLHRHNVRLRIIGDISRFNSRLQERIRKSEALTAHNTGLTLNIAANYGGRWDIVQGVRQLAEQVQAGVLRPDQIDEERLGQQICMHELAPVDLVIRTGGEHRISNFLLWQIAYAELYFTDVLWPDFDEQDFEGALHAFANRERRFGGTEPGDDKA</sequence>
<gene>
    <name evidence="1" type="primary">uppS</name>
    <name type="ordered locus">STM0221</name>
</gene>
<organism>
    <name type="scientific">Salmonella typhimurium (strain LT2 / SGSC1412 / ATCC 700720)</name>
    <dbReference type="NCBI Taxonomy" id="99287"/>
    <lineage>
        <taxon>Bacteria</taxon>
        <taxon>Pseudomonadati</taxon>
        <taxon>Pseudomonadota</taxon>
        <taxon>Gammaproteobacteria</taxon>
        <taxon>Enterobacterales</taxon>
        <taxon>Enterobacteriaceae</taxon>
        <taxon>Salmonella</taxon>
    </lineage>
</organism>
<feature type="chain" id="PRO_0000123668" description="Ditrans,polycis-undecaprenyl-diphosphate synthase ((2E,6E)-farnesyl-diphosphate specific)">
    <location>
        <begin position="1"/>
        <end position="252"/>
    </location>
</feature>
<feature type="active site" evidence="1">
    <location>
        <position position="25"/>
    </location>
</feature>
<feature type="active site" description="Proton acceptor" evidence="1">
    <location>
        <position position="73"/>
    </location>
</feature>
<feature type="binding site" evidence="1">
    <location>
        <position position="25"/>
    </location>
    <ligand>
        <name>Mg(2+)</name>
        <dbReference type="ChEBI" id="CHEBI:18420"/>
    </ligand>
</feature>
<feature type="binding site" evidence="1">
    <location>
        <begin position="26"/>
        <end position="29"/>
    </location>
    <ligand>
        <name>substrate</name>
    </ligand>
</feature>
<feature type="binding site" evidence="1">
    <location>
        <position position="30"/>
    </location>
    <ligand>
        <name>substrate</name>
    </ligand>
</feature>
<feature type="binding site" evidence="1">
    <location>
        <position position="38"/>
    </location>
    <ligand>
        <name>substrate</name>
    </ligand>
</feature>
<feature type="binding site" evidence="1">
    <location>
        <position position="42"/>
    </location>
    <ligand>
        <name>substrate</name>
    </ligand>
</feature>
<feature type="binding site" evidence="1">
    <location>
        <begin position="70"/>
        <end position="72"/>
    </location>
    <ligand>
        <name>substrate</name>
    </ligand>
</feature>
<feature type="binding site" evidence="1">
    <location>
        <position position="74"/>
    </location>
    <ligand>
        <name>substrate</name>
    </ligand>
</feature>
<feature type="binding site" evidence="1">
    <location>
        <position position="76"/>
    </location>
    <ligand>
        <name>substrate</name>
    </ligand>
</feature>
<feature type="binding site" evidence="1">
    <location>
        <position position="193"/>
    </location>
    <ligand>
        <name>substrate</name>
    </ligand>
</feature>
<feature type="binding site" evidence="1">
    <location>
        <position position="198"/>
    </location>
    <ligand>
        <name>Mg(2+)</name>
        <dbReference type="ChEBI" id="CHEBI:18420"/>
    </ligand>
</feature>
<feature type="binding site" evidence="1">
    <location>
        <begin position="199"/>
        <end position="201"/>
    </location>
    <ligand>
        <name>substrate</name>
    </ligand>
</feature>
<feature type="binding site" evidence="1">
    <location>
        <position position="212"/>
    </location>
    <ligand>
        <name>Mg(2+)</name>
        <dbReference type="ChEBI" id="CHEBI:18420"/>
    </ligand>
</feature>
<accession>Q8ZRP2</accession>
<name>UPPS_SALTY</name>
<reference key="1">
    <citation type="journal article" date="2001" name="Nature">
        <title>Complete genome sequence of Salmonella enterica serovar Typhimurium LT2.</title>
        <authorList>
            <person name="McClelland M."/>
            <person name="Sanderson K.E."/>
            <person name="Spieth J."/>
            <person name="Clifton S.W."/>
            <person name="Latreille P."/>
            <person name="Courtney L."/>
            <person name="Porwollik S."/>
            <person name="Ali J."/>
            <person name="Dante M."/>
            <person name="Du F."/>
            <person name="Hou S."/>
            <person name="Layman D."/>
            <person name="Leonard S."/>
            <person name="Nguyen C."/>
            <person name="Scott K."/>
            <person name="Holmes A."/>
            <person name="Grewal N."/>
            <person name="Mulvaney E."/>
            <person name="Ryan E."/>
            <person name="Sun H."/>
            <person name="Florea L."/>
            <person name="Miller W."/>
            <person name="Stoneking T."/>
            <person name="Nhan M."/>
            <person name="Waterston R."/>
            <person name="Wilson R.K."/>
        </authorList>
    </citation>
    <scope>NUCLEOTIDE SEQUENCE [LARGE SCALE GENOMIC DNA]</scope>
    <source>
        <strain>LT2 / SGSC1412 / ATCC 700720</strain>
    </source>
</reference>